<sequence length="545" mass="57681">MAKRIIYNEQARRALERGIDILAESVAVTLGPKGRNVVLEKKFGAPQIINDGVTIAKEIELEDHIENTGVALIRQAASKTNDAAGDGTTTATVLAHAMVKAGLRNVAAGANAITLKKGIDKATEFLVGKIQENSKPISDSNAIAQCGTIAAGNDEEVGQMIANAMDKVGKEGVISLEEGKSMTTELEVTEGMRFDKGYISPYFATDTERMEAVLDEPYILLTDKKIALVQDLVPVLEQIAKTGKPLVIIAEDIEKEALATLVVNRLRGVLNVAAVKAPGFGDRRKAMLEDMAVLTNGQLITEDAGLKLENATLDMLGTGRRITINKETTTIVAEGNEQAVKARCDQIKKQMDETDSSYDKEKLQERLAKLAGGVAVIKVGAATETEMKDKKLRLEDAINATKAAVEEGIVPGGGTTLAHLSPILKEWADKNLEGEELIGANIVEASLTAPLMRIAENAGSNGAVIAENVKTKPFNDGFNAATGEYVDMSSAGIVDPAKVTRSGLQNAASIAGMVLTTECIVADLPEKKDSAAPAGAPGMGGDFDY</sequence>
<comment type="function">
    <text evidence="1">Together with its co-chaperonin GroES, plays an essential role in assisting protein folding. The GroEL-GroES system forms a nano-cage that allows encapsulation of the non-native substrate proteins and provides a physical environment optimized to promote and accelerate protein folding.</text>
</comment>
<comment type="catalytic activity">
    <reaction evidence="1">
        <text>ATP + H2O + a folded polypeptide = ADP + phosphate + an unfolded polypeptide.</text>
        <dbReference type="EC" id="5.6.1.7"/>
    </reaction>
</comment>
<comment type="subunit">
    <text evidence="1">Forms a cylinder of 14 subunits composed of two heptameric rings stacked back-to-back. Interacts with the co-chaperonin GroES.</text>
</comment>
<comment type="subcellular location">
    <subcellularLocation>
        <location evidence="1">Cytoplasm</location>
    </subcellularLocation>
</comment>
<comment type="similarity">
    <text evidence="1">Belongs to the chaperonin (HSP60) family.</text>
</comment>
<name>CH602_PROMS</name>
<dbReference type="EC" id="5.6.1.7" evidence="1"/>
<dbReference type="EMBL" id="CP000551">
    <property type="protein sequence ID" value="ABM70921.1"/>
    <property type="molecule type" value="Genomic_DNA"/>
</dbReference>
<dbReference type="SMR" id="A2BT10"/>
<dbReference type="STRING" id="146891.A9601_16381"/>
<dbReference type="KEGG" id="pmb:A9601_16381"/>
<dbReference type="eggNOG" id="COG0459">
    <property type="taxonomic scope" value="Bacteria"/>
</dbReference>
<dbReference type="HOGENOM" id="CLU_016503_3_0_3"/>
<dbReference type="OrthoDB" id="9766614at2"/>
<dbReference type="Proteomes" id="UP000002590">
    <property type="component" value="Chromosome"/>
</dbReference>
<dbReference type="GO" id="GO:0005737">
    <property type="term" value="C:cytoplasm"/>
    <property type="evidence" value="ECO:0007669"/>
    <property type="project" value="UniProtKB-SubCell"/>
</dbReference>
<dbReference type="GO" id="GO:0005524">
    <property type="term" value="F:ATP binding"/>
    <property type="evidence" value="ECO:0007669"/>
    <property type="project" value="UniProtKB-UniRule"/>
</dbReference>
<dbReference type="GO" id="GO:0140662">
    <property type="term" value="F:ATP-dependent protein folding chaperone"/>
    <property type="evidence" value="ECO:0007669"/>
    <property type="project" value="InterPro"/>
</dbReference>
<dbReference type="GO" id="GO:0016853">
    <property type="term" value="F:isomerase activity"/>
    <property type="evidence" value="ECO:0007669"/>
    <property type="project" value="UniProtKB-KW"/>
</dbReference>
<dbReference type="GO" id="GO:0051082">
    <property type="term" value="F:unfolded protein binding"/>
    <property type="evidence" value="ECO:0007669"/>
    <property type="project" value="UniProtKB-UniRule"/>
</dbReference>
<dbReference type="GO" id="GO:0042026">
    <property type="term" value="P:protein refolding"/>
    <property type="evidence" value="ECO:0007669"/>
    <property type="project" value="UniProtKB-UniRule"/>
</dbReference>
<dbReference type="CDD" id="cd03344">
    <property type="entry name" value="GroEL"/>
    <property type="match status" value="1"/>
</dbReference>
<dbReference type="FunFam" id="3.50.7.10:FF:000001">
    <property type="entry name" value="60 kDa chaperonin"/>
    <property type="match status" value="1"/>
</dbReference>
<dbReference type="Gene3D" id="3.50.7.10">
    <property type="entry name" value="GroEL"/>
    <property type="match status" value="1"/>
</dbReference>
<dbReference type="Gene3D" id="1.10.560.10">
    <property type="entry name" value="GroEL-like equatorial domain"/>
    <property type="match status" value="1"/>
</dbReference>
<dbReference type="Gene3D" id="3.30.260.10">
    <property type="entry name" value="TCP-1-like chaperonin intermediate domain"/>
    <property type="match status" value="1"/>
</dbReference>
<dbReference type="HAMAP" id="MF_00600">
    <property type="entry name" value="CH60"/>
    <property type="match status" value="1"/>
</dbReference>
<dbReference type="InterPro" id="IPR018370">
    <property type="entry name" value="Chaperonin_Cpn60_CS"/>
</dbReference>
<dbReference type="InterPro" id="IPR001844">
    <property type="entry name" value="Cpn60/GroEL"/>
</dbReference>
<dbReference type="InterPro" id="IPR002423">
    <property type="entry name" value="Cpn60/GroEL/TCP-1"/>
</dbReference>
<dbReference type="InterPro" id="IPR027409">
    <property type="entry name" value="GroEL-like_apical_dom_sf"/>
</dbReference>
<dbReference type="InterPro" id="IPR027413">
    <property type="entry name" value="GROEL-like_equatorial_sf"/>
</dbReference>
<dbReference type="InterPro" id="IPR027410">
    <property type="entry name" value="TCP-1-like_intermed_sf"/>
</dbReference>
<dbReference type="NCBIfam" id="TIGR02348">
    <property type="entry name" value="GroEL"/>
    <property type="match status" value="1"/>
</dbReference>
<dbReference type="NCBIfam" id="NF000592">
    <property type="entry name" value="PRK00013.1"/>
    <property type="match status" value="1"/>
</dbReference>
<dbReference type="NCBIfam" id="NF009487">
    <property type="entry name" value="PRK12849.1"/>
    <property type="match status" value="1"/>
</dbReference>
<dbReference type="NCBIfam" id="NF009488">
    <property type="entry name" value="PRK12850.1"/>
    <property type="match status" value="1"/>
</dbReference>
<dbReference type="NCBIfam" id="NF009489">
    <property type="entry name" value="PRK12851.1"/>
    <property type="match status" value="1"/>
</dbReference>
<dbReference type="PANTHER" id="PTHR45633">
    <property type="entry name" value="60 KDA HEAT SHOCK PROTEIN, MITOCHONDRIAL"/>
    <property type="match status" value="1"/>
</dbReference>
<dbReference type="Pfam" id="PF00118">
    <property type="entry name" value="Cpn60_TCP1"/>
    <property type="match status" value="1"/>
</dbReference>
<dbReference type="PRINTS" id="PR00298">
    <property type="entry name" value="CHAPERONIN60"/>
</dbReference>
<dbReference type="SUPFAM" id="SSF52029">
    <property type="entry name" value="GroEL apical domain-like"/>
    <property type="match status" value="1"/>
</dbReference>
<dbReference type="SUPFAM" id="SSF48592">
    <property type="entry name" value="GroEL equatorial domain-like"/>
    <property type="match status" value="2"/>
</dbReference>
<dbReference type="PROSITE" id="PS00296">
    <property type="entry name" value="CHAPERONINS_CPN60"/>
    <property type="match status" value="1"/>
</dbReference>
<reference key="1">
    <citation type="journal article" date="2007" name="PLoS Genet.">
        <title>Patterns and implications of gene gain and loss in the evolution of Prochlorococcus.</title>
        <authorList>
            <person name="Kettler G.C."/>
            <person name="Martiny A.C."/>
            <person name="Huang K."/>
            <person name="Zucker J."/>
            <person name="Coleman M.L."/>
            <person name="Rodrigue S."/>
            <person name="Chen F."/>
            <person name="Lapidus A."/>
            <person name="Ferriera S."/>
            <person name="Johnson J."/>
            <person name="Steglich C."/>
            <person name="Church G.M."/>
            <person name="Richardson P."/>
            <person name="Chisholm S.W."/>
        </authorList>
    </citation>
    <scope>NUCLEOTIDE SEQUENCE [LARGE SCALE GENOMIC DNA]</scope>
    <source>
        <strain>AS9601</strain>
    </source>
</reference>
<gene>
    <name evidence="1" type="primary">groEL2</name>
    <name evidence="1" type="synonym">groL2</name>
    <name type="ordered locus">A9601_16381</name>
</gene>
<proteinExistence type="inferred from homology"/>
<keyword id="KW-0067">ATP-binding</keyword>
<keyword id="KW-0143">Chaperone</keyword>
<keyword id="KW-0963">Cytoplasm</keyword>
<keyword id="KW-0413">Isomerase</keyword>
<keyword id="KW-0547">Nucleotide-binding</keyword>
<accession>A2BT10</accession>
<protein>
    <recommendedName>
        <fullName evidence="1">Chaperonin GroEL 2</fullName>
        <ecNumber evidence="1">5.6.1.7</ecNumber>
    </recommendedName>
    <alternativeName>
        <fullName evidence="1">60 kDa chaperonin 2</fullName>
    </alternativeName>
    <alternativeName>
        <fullName evidence="1">Chaperonin-60 2</fullName>
        <shortName evidence="1">Cpn60 2</shortName>
    </alternativeName>
</protein>
<feature type="chain" id="PRO_0000332039" description="Chaperonin GroEL 2">
    <location>
        <begin position="1"/>
        <end position="545"/>
    </location>
</feature>
<feature type="binding site" evidence="1">
    <location>
        <begin position="29"/>
        <end position="32"/>
    </location>
    <ligand>
        <name>ATP</name>
        <dbReference type="ChEBI" id="CHEBI:30616"/>
    </ligand>
</feature>
<feature type="binding site" evidence="1">
    <location>
        <begin position="86"/>
        <end position="90"/>
    </location>
    <ligand>
        <name>ATP</name>
        <dbReference type="ChEBI" id="CHEBI:30616"/>
    </ligand>
</feature>
<feature type="binding site" evidence="1">
    <location>
        <position position="413"/>
    </location>
    <ligand>
        <name>ATP</name>
        <dbReference type="ChEBI" id="CHEBI:30616"/>
    </ligand>
</feature>
<feature type="binding site" evidence="1">
    <location>
        <begin position="479"/>
        <end position="481"/>
    </location>
    <ligand>
        <name>ATP</name>
        <dbReference type="ChEBI" id="CHEBI:30616"/>
    </ligand>
</feature>
<feature type="binding site" evidence="1">
    <location>
        <position position="495"/>
    </location>
    <ligand>
        <name>ATP</name>
        <dbReference type="ChEBI" id="CHEBI:30616"/>
    </ligand>
</feature>
<organism>
    <name type="scientific">Prochlorococcus marinus (strain AS9601)</name>
    <dbReference type="NCBI Taxonomy" id="146891"/>
    <lineage>
        <taxon>Bacteria</taxon>
        <taxon>Bacillati</taxon>
        <taxon>Cyanobacteriota</taxon>
        <taxon>Cyanophyceae</taxon>
        <taxon>Synechococcales</taxon>
        <taxon>Prochlorococcaceae</taxon>
        <taxon>Prochlorococcus</taxon>
    </lineage>
</organism>
<evidence type="ECO:0000255" key="1">
    <source>
        <dbReference type="HAMAP-Rule" id="MF_00600"/>
    </source>
</evidence>